<evidence type="ECO:0000255" key="1">
    <source>
        <dbReference type="PROSITE-ProRule" id="PRU00238"/>
    </source>
</evidence>
<evidence type="ECO:0000305" key="2"/>
<comment type="function">
    <text>Involved in oxygen transport from the lung to the various peripheral tissues.</text>
</comment>
<comment type="subunit">
    <text>Heterotetramer of two alpha chains and two beta chains.</text>
</comment>
<comment type="tissue specificity">
    <text>Red blood cells.</text>
</comment>
<comment type="similarity">
    <text evidence="1">Belongs to the globin family.</text>
</comment>
<sequence>MGLTAHDRQLINSTWGKLCAKTIGQEALGRLLWTYPWTQRYFSSFGNLNSADAVFHNEAVAAHGEKVVTSIGEAIKHMDDIKGYYAQLSKYHSETLHVDPLNFKRFGGCLSIALARHFHEEYTPELHAAYEHLFDAIADALGKGYH</sequence>
<organism>
    <name type="scientific">Xenopus laevis</name>
    <name type="common">African clawed frog</name>
    <dbReference type="NCBI Taxonomy" id="8355"/>
    <lineage>
        <taxon>Eukaryota</taxon>
        <taxon>Metazoa</taxon>
        <taxon>Chordata</taxon>
        <taxon>Craniata</taxon>
        <taxon>Vertebrata</taxon>
        <taxon>Euteleostomi</taxon>
        <taxon>Amphibia</taxon>
        <taxon>Batrachia</taxon>
        <taxon>Anura</taxon>
        <taxon>Pipoidea</taxon>
        <taxon>Pipidae</taxon>
        <taxon>Xenopodinae</taxon>
        <taxon>Xenopus</taxon>
        <taxon>Xenopus</taxon>
    </lineage>
</organism>
<dbReference type="EMBL" id="M15382">
    <property type="protein sequence ID" value="AAA49641.1"/>
    <property type="molecule type" value="Genomic_DNA"/>
</dbReference>
<dbReference type="EMBL" id="V01433">
    <property type="protein sequence ID" value="CAA24697.1"/>
    <property type="molecule type" value="mRNA"/>
</dbReference>
<dbReference type="EMBL" id="BC106693">
    <property type="protein sequence ID" value="AAI06694.1"/>
    <property type="molecule type" value="mRNA"/>
</dbReference>
<dbReference type="EMBL" id="X07164">
    <property type="protein sequence ID" value="CAA30156.1"/>
    <property type="molecule type" value="Genomic_DNA"/>
</dbReference>
<dbReference type="EMBL" id="M10601">
    <property type="protein sequence ID" value="AAA49735.1"/>
    <property type="molecule type" value="mRNA"/>
</dbReference>
<dbReference type="EMBL" id="J00978">
    <property type="protein sequence ID" value="AAA49734.1"/>
    <property type="molecule type" value="Genomic_DNA"/>
</dbReference>
<dbReference type="PIR" id="A92432">
    <property type="entry name" value="HBXL"/>
</dbReference>
<dbReference type="PIR" id="I51430">
    <property type="entry name" value="I51430"/>
</dbReference>
<dbReference type="RefSeq" id="NP_001089816.1">
    <property type="nucleotide sequence ID" value="NM_001096347.1"/>
</dbReference>
<dbReference type="SMR" id="P02132"/>
<dbReference type="DNASU" id="734881"/>
<dbReference type="GeneID" id="734881"/>
<dbReference type="KEGG" id="xla:734881"/>
<dbReference type="AGR" id="Xenbase:XB-GENE-5913262"/>
<dbReference type="CTD" id="734881"/>
<dbReference type="Xenbase" id="XB-GENE-5913262">
    <property type="gene designation" value="hbg1.L"/>
</dbReference>
<dbReference type="OMA" id="SADAICH"/>
<dbReference type="OrthoDB" id="9886081at2759"/>
<dbReference type="Proteomes" id="UP000186698">
    <property type="component" value="Chromosome 9_10L"/>
</dbReference>
<dbReference type="Bgee" id="734881">
    <property type="expression patterns" value="Expressed in liver and 19 other cell types or tissues"/>
</dbReference>
<dbReference type="GO" id="GO:0072562">
    <property type="term" value="C:blood microparticle"/>
    <property type="evidence" value="ECO:0007669"/>
    <property type="project" value="TreeGrafter"/>
</dbReference>
<dbReference type="GO" id="GO:0031838">
    <property type="term" value="C:haptoglobin-hemoglobin complex"/>
    <property type="evidence" value="ECO:0000318"/>
    <property type="project" value="GO_Central"/>
</dbReference>
<dbReference type="GO" id="GO:0005833">
    <property type="term" value="C:hemoglobin complex"/>
    <property type="evidence" value="ECO:0000318"/>
    <property type="project" value="GO_Central"/>
</dbReference>
<dbReference type="GO" id="GO:0031720">
    <property type="term" value="F:haptoglobin binding"/>
    <property type="evidence" value="ECO:0007669"/>
    <property type="project" value="TreeGrafter"/>
</dbReference>
<dbReference type="GO" id="GO:0020037">
    <property type="term" value="F:heme binding"/>
    <property type="evidence" value="ECO:0000318"/>
    <property type="project" value="GO_Central"/>
</dbReference>
<dbReference type="GO" id="GO:0046872">
    <property type="term" value="F:metal ion binding"/>
    <property type="evidence" value="ECO:0007669"/>
    <property type="project" value="UniProtKB-KW"/>
</dbReference>
<dbReference type="GO" id="GO:0043177">
    <property type="term" value="F:organic acid binding"/>
    <property type="evidence" value="ECO:0007669"/>
    <property type="project" value="TreeGrafter"/>
</dbReference>
<dbReference type="GO" id="GO:0019825">
    <property type="term" value="F:oxygen binding"/>
    <property type="evidence" value="ECO:0000318"/>
    <property type="project" value="GO_Central"/>
</dbReference>
<dbReference type="GO" id="GO:0005344">
    <property type="term" value="F:oxygen carrier activity"/>
    <property type="evidence" value="ECO:0000318"/>
    <property type="project" value="GO_Central"/>
</dbReference>
<dbReference type="GO" id="GO:0004601">
    <property type="term" value="F:peroxidase activity"/>
    <property type="evidence" value="ECO:0007669"/>
    <property type="project" value="TreeGrafter"/>
</dbReference>
<dbReference type="GO" id="GO:0042744">
    <property type="term" value="P:hydrogen peroxide catabolic process"/>
    <property type="evidence" value="ECO:0000318"/>
    <property type="project" value="GO_Central"/>
</dbReference>
<dbReference type="CDD" id="cd08925">
    <property type="entry name" value="Hb-beta-like"/>
    <property type="match status" value="1"/>
</dbReference>
<dbReference type="Gene3D" id="1.10.490.10">
    <property type="entry name" value="Globins"/>
    <property type="match status" value="1"/>
</dbReference>
<dbReference type="InterPro" id="IPR000971">
    <property type="entry name" value="Globin"/>
</dbReference>
<dbReference type="InterPro" id="IPR009050">
    <property type="entry name" value="Globin-like_sf"/>
</dbReference>
<dbReference type="InterPro" id="IPR012292">
    <property type="entry name" value="Globin/Proto"/>
</dbReference>
<dbReference type="InterPro" id="IPR002337">
    <property type="entry name" value="Hemoglobin_b"/>
</dbReference>
<dbReference type="InterPro" id="IPR050056">
    <property type="entry name" value="Hemoglobin_oxygen_transport"/>
</dbReference>
<dbReference type="PANTHER" id="PTHR11442">
    <property type="entry name" value="HEMOGLOBIN FAMILY MEMBER"/>
    <property type="match status" value="1"/>
</dbReference>
<dbReference type="PANTHER" id="PTHR11442:SF100">
    <property type="entry name" value="HEMOGLOBIN SUBUNIT BETA-1"/>
    <property type="match status" value="1"/>
</dbReference>
<dbReference type="Pfam" id="PF00042">
    <property type="entry name" value="Globin"/>
    <property type="match status" value="1"/>
</dbReference>
<dbReference type="PRINTS" id="PR00814">
    <property type="entry name" value="BETAHAEM"/>
</dbReference>
<dbReference type="SUPFAM" id="SSF46458">
    <property type="entry name" value="Globin-like"/>
    <property type="match status" value="1"/>
</dbReference>
<dbReference type="PROSITE" id="PS01033">
    <property type="entry name" value="GLOBIN"/>
    <property type="match status" value="1"/>
</dbReference>
<accession>P02132</accession>
<accession>Q3B895</accession>
<gene>
    <name type="primary">hbb1</name>
</gene>
<keyword id="KW-0349">Heme</keyword>
<keyword id="KW-0408">Iron</keyword>
<keyword id="KW-0479">Metal-binding</keyword>
<keyword id="KW-0561">Oxygen transport</keyword>
<keyword id="KW-1185">Reference proteome</keyword>
<keyword id="KW-0813">Transport</keyword>
<name>HBB1_XENLA</name>
<reference key="1">
    <citation type="journal article" date="1983" name="J. Biol. Chem.">
        <title>The complete nucleotide sequence of the major adult beta globin gene of Xenopus laevis.</title>
        <authorList>
            <person name="Patient R.K."/>
            <person name="Harris R."/>
            <person name="Walmsley M.E."/>
            <person name="Williams J.G."/>
        </authorList>
    </citation>
    <scope>NUCLEOTIDE SEQUENCE [GENOMIC DNA]</scope>
</reference>
<reference key="2">
    <citation type="journal article" date="1980" name="Nucleic Acids Res.">
        <title>The nucleotide sequence of the major beta-globin mRNA from Xenopus laevis.</title>
        <authorList>
            <person name="Williams J.G."/>
            <person name="Kay R.M."/>
            <person name="Patient R.K."/>
        </authorList>
    </citation>
    <scope>NUCLEOTIDE SEQUENCE [MRNA]</scope>
</reference>
<reference key="3">
    <citation type="submission" date="2005-10" db="EMBL/GenBank/DDBJ databases">
        <authorList>
            <consortium name="NIH - Xenopus Gene Collection (XGC) project"/>
        </authorList>
    </citation>
    <scope>NUCLEOTIDE SEQUENCE [LARGE SCALE MRNA]</scope>
    <source>
        <tissue>Liver</tissue>
    </source>
</reference>
<reference key="4">
    <citation type="journal article" date="1980" name="Dev. Biol.">
        <title>Partial sequence analysis of Xenopus alpha- and beta-globin mRNA as determined from recombinant DNA plasmids.</title>
        <authorList>
            <person name="Richardson C."/>
            <person name="Cappello J."/>
            <person name="Cochran M.D."/>
            <person name="Armentrout R.W."/>
            <person name="Brown R.D."/>
        </authorList>
    </citation>
    <scope>NUCLEOTIDE SEQUENCE [GENOMIC DNA] OF 39-146</scope>
</reference>
<reference key="5">
    <citation type="journal article" date="1980" name="Nucleic Acids Res.">
        <title>Molecular cloning of cDNA sequences coding for the major alpha- and beta-globin polypeptides of adult Xenopus laevis.</title>
        <authorList>
            <person name="Kay R.M."/>
            <person name="Harris R."/>
            <person name="Patient R.K."/>
            <person name="Williams J.G."/>
        </authorList>
    </citation>
    <scope>NUCLEOTIDE SEQUENCE [MRNA] OF 133-146</scope>
</reference>
<reference key="6">
    <citation type="journal article" date="1988" name="J. Mol. Biol.">
        <title>5' structural motifs and Xenopus beta globin gene activation.</title>
        <authorList>
            <person name="Brewer A.C."/>
            <person name="Enver T."/>
            <person name="Greaves D.R."/>
            <person name="Allan J."/>
            <person name="Patient R.K."/>
        </authorList>
    </citation>
    <scope>NUCLEOTIDE SEQUENCE [GENOMIC DNA] OF 1-26</scope>
</reference>
<feature type="initiator methionine" description="Removed">
    <location>
        <position position="1"/>
    </location>
</feature>
<feature type="chain" id="PRO_0000053155" description="Hemoglobin subunit beta-1">
    <location>
        <begin position="2"/>
        <end position="146"/>
    </location>
</feature>
<feature type="domain" description="Globin" evidence="1">
    <location>
        <begin position="2"/>
        <end position="146"/>
    </location>
</feature>
<feature type="binding site" description="distal binding residue">
    <location>
        <position position="63"/>
    </location>
    <ligand>
        <name>heme b</name>
        <dbReference type="ChEBI" id="CHEBI:60344"/>
    </ligand>
    <ligandPart>
        <name>Fe</name>
        <dbReference type="ChEBI" id="CHEBI:18248"/>
    </ligandPart>
</feature>
<feature type="binding site" description="proximal binding residue">
    <location>
        <position position="92"/>
    </location>
    <ligand>
        <name>heme b</name>
        <dbReference type="ChEBI" id="CHEBI:60344"/>
    </ligand>
    <ligandPart>
        <name>Fe</name>
        <dbReference type="ChEBI" id="CHEBI:18248"/>
    </ligandPart>
</feature>
<feature type="sequence conflict" description="In Ref. 4; AAA49641." evidence="2" ref="4">
    <original>L</original>
    <variation>A</variation>
    <location>
        <position position="101"/>
    </location>
</feature>
<feature type="sequence conflict" description="In Ref. 4; AAA49641." evidence="2" ref="4">
    <original>K</original>
    <variation>G</variation>
    <location>
        <position position="104"/>
    </location>
</feature>
<protein>
    <recommendedName>
        <fullName>Hemoglobin subunit beta-1</fullName>
    </recommendedName>
    <alternativeName>
        <fullName>Beta-1-globin</fullName>
    </alternativeName>
    <alternativeName>
        <fullName>Hemoglobin beta-1 chain</fullName>
    </alternativeName>
    <alternativeName>
        <fullName>Hemoglobin beta-major chain</fullName>
    </alternativeName>
</protein>
<proteinExistence type="evidence at transcript level"/>